<comment type="function">
    <text evidence="4 5 6">Plays a central role in vernalization by mediating the initial transcriptional repression of the homeotic gene FLC, a floral repressor, after a cold treatment. However, due to its transient expression, it cannot maintain repression of FLC, which is then maintained by Polycomb Group complexes containing VRN2 throughout development. Required to deacetylate histones on the FLC promoter. Together with VIL1, required during vernalization for the modifications of FLC and FLM chromatin that are associated with an epigenetically silenced state (e.g. chromatin modifications, histone deacetylation, and trimethylated H3 'Lys-4' H3K4me3 and 'Lys-27' H3K27me3) and with acquisition of competence to flower.</text>
</comment>
<comment type="subunit">
    <text evidence="5 6 7">Interacts with VIL1 and VIL2. The heterodimer made of VIN3 and VIL1 is required for establishing the vernalization-induced epigenetic silencing of FLC. Component of the plant homeodomain / polycomb repressive complex 2 (PHD-PRC2) large complex during prolonged cold, composed of core PRC2 components (VRN2, EZA1, FIE and MSI1), and three related PHD finger proteins (VIL1, VIL2 and VIN3) that mediates histone H3 trimethylation on 'Lys-27' (H3K27me3).</text>
</comment>
<comment type="interaction">
    <interactant intactId="EBI-2358223">
        <id>Q9FIE3</id>
    </interactant>
    <interactant intactId="EBI-2128880">
        <id>Q8W5B1</id>
        <label>VRN2</label>
    </interactant>
    <organismsDiffer>false</organismsDiffer>
    <experiments>2</experiments>
</comment>
<comment type="subcellular location">
    <subcellularLocation>
        <location>Nucleus</location>
    </subcellularLocation>
    <subcellularLocation>
        <location>Nucleus speckle</location>
    </subcellularLocation>
    <text>Probably DNA-associated; interacts directly with the FLC regulatory regions.</text>
</comment>
<comment type="tissue specificity">
    <text evidence="4">Expressed in shoot and root apices. Displays the same pattern of expression as FLC.</text>
</comment>
<comment type="induction">
    <text evidence="4 5 6">By cold. Expressed only after a duration of cold exposure that is effective for vernalization. Strongly down-regulated after return to a warm growth temperature.</text>
</comment>
<comment type="disruption phenotype">
    <text evidence="5 6">Impaired vernalization response with incomplete repression of FLC during and after cold exposure, due to a reduction in vernalization-induced histone H3 deacetylation and methylation (e.g. H3K4me3 and H3K27me3).</text>
</comment>
<comment type="sequence caution" evidence="8">
    <conflict type="erroneous gene model prediction">
        <sequence resource="EMBL-CDS" id="BAB08475"/>
    </conflict>
</comment>
<proteinExistence type="evidence at protein level"/>
<dbReference type="EMBL" id="AY446960">
    <property type="protein sequence ID" value="AAR91717.2"/>
    <property type="molecule type" value="mRNA"/>
</dbReference>
<dbReference type="EMBL" id="AB016891">
    <property type="protein sequence ID" value="BAB08475.1"/>
    <property type="status" value="ALT_SEQ"/>
    <property type="molecule type" value="Genomic_DNA"/>
</dbReference>
<dbReference type="EMBL" id="CP002688">
    <property type="protein sequence ID" value="AED96894.1"/>
    <property type="molecule type" value="Genomic_DNA"/>
</dbReference>
<dbReference type="RefSeq" id="NP_001332646.1">
    <property type="nucleotide sequence ID" value="NM_001345260.1"/>
</dbReference>
<dbReference type="RefSeq" id="NP_200548.2">
    <property type="nucleotide sequence ID" value="NM_125121.3"/>
</dbReference>
<dbReference type="PDB" id="7O6T">
    <property type="method" value="X-ray"/>
    <property type="resolution" value="2.02 A"/>
    <property type="chains" value="A/B=531-603"/>
</dbReference>
<dbReference type="PDB" id="7O6U">
    <property type="method" value="X-ray"/>
    <property type="resolution" value="1.84 A"/>
    <property type="chains" value="A=532-601"/>
</dbReference>
<dbReference type="PDB" id="7OQV">
    <property type="method" value="X-ray"/>
    <property type="resolution" value="2.40 A"/>
    <property type="chains" value="AAA/BBB/CCC/DDD=529-603"/>
</dbReference>
<dbReference type="PDBsum" id="7O6T"/>
<dbReference type="PDBsum" id="7O6U"/>
<dbReference type="PDBsum" id="7OQV"/>
<dbReference type="SMR" id="Q9FIE3"/>
<dbReference type="BioGRID" id="21088">
    <property type="interactions" value="3"/>
</dbReference>
<dbReference type="DIP" id="DIP-48611N"/>
<dbReference type="FunCoup" id="Q9FIE3">
    <property type="interactions" value="6"/>
</dbReference>
<dbReference type="IntAct" id="Q9FIE3">
    <property type="interactions" value="3"/>
</dbReference>
<dbReference type="STRING" id="3702.Q9FIE3"/>
<dbReference type="PaxDb" id="3702-AT5G57380.1"/>
<dbReference type="EnsemblPlants" id="AT5G57380.1">
    <property type="protein sequence ID" value="AT5G57380.1"/>
    <property type="gene ID" value="AT5G57380"/>
</dbReference>
<dbReference type="GeneID" id="835844"/>
<dbReference type="Gramene" id="AT5G57380.1">
    <property type="protein sequence ID" value="AT5G57380.1"/>
    <property type="gene ID" value="AT5G57380"/>
</dbReference>
<dbReference type="KEGG" id="ath:AT5G57380"/>
<dbReference type="Araport" id="AT5G57380"/>
<dbReference type="TAIR" id="AT5G57380">
    <property type="gene designation" value="VIN3"/>
</dbReference>
<dbReference type="eggNOG" id="ENOG502QR8D">
    <property type="taxonomic scope" value="Eukaryota"/>
</dbReference>
<dbReference type="HOGENOM" id="CLU_016873_0_0_1"/>
<dbReference type="InParanoid" id="Q9FIE3"/>
<dbReference type="PhylomeDB" id="Q9FIE3"/>
<dbReference type="PRO" id="PR:Q9FIE3"/>
<dbReference type="Proteomes" id="UP000006548">
    <property type="component" value="Chromosome 5"/>
</dbReference>
<dbReference type="ExpressionAtlas" id="Q9FIE3">
    <property type="expression patterns" value="baseline and differential"/>
</dbReference>
<dbReference type="GO" id="GO:0005677">
    <property type="term" value="C:chromatin silencing complex"/>
    <property type="evidence" value="ECO:0000314"/>
    <property type="project" value="UniProtKB"/>
</dbReference>
<dbReference type="GO" id="GO:0016607">
    <property type="term" value="C:nuclear speck"/>
    <property type="evidence" value="ECO:0000314"/>
    <property type="project" value="UniProtKB"/>
</dbReference>
<dbReference type="GO" id="GO:0005634">
    <property type="term" value="C:nucleus"/>
    <property type="evidence" value="ECO:0000314"/>
    <property type="project" value="UniProtKB"/>
</dbReference>
<dbReference type="GO" id="GO:0003677">
    <property type="term" value="F:DNA binding"/>
    <property type="evidence" value="ECO:0007669"/>
    <property type="project" value="UniProtKB-KW"/>
</dbReference>
<dbReference type="GO" id="GO:0008270">
    <property type="term" value="F:zinc ion binding"/>
    <property type="evidence" value="ECO:0007669"/>
    <property type="project" value="UniProtKB-KW"/>
</dbReference>
<dbReference type="GO" id="GO:0070417">
    <property type="term" value="P:cellular response to cold"/>
    <property type="evidence" value="ECO:0000270"/>
    <property type="project" value="UniProtKB"/>
</dbReference>
<dbReference type="GO" id="GO:0045814">
    <property type="term" value="P:negative regulation of gene expression, epigenetic"/>
    <property type="evidence" value="ECO:0000315"/>
    <property type="project" value="UniProtKB"/>
</dbReference>
<dbReference type="GO" id="GO:0009409">
    <property type="term" value="P:response to cold"/>
    <property type="evidence" value="ECO:0000270"/>
    <property type="project" value="UniProtKB"/>
</dbReference>
<dbReference type="GO" id="GO:0001666">
    <property type="term" value="P:response to hypoxia"/>
    <property type="evidence" value="ECO:0000315"/>
    <property type="project" value="TAIR"/>
</dbReference>
<dbReference type="GO" id="GO:0010048">
    <property type="term" value="P:vernalization response"/>
    <property type="evidence" value="ECO:0000315"/>
    <property type="project" value="UniProtKB"/>
</dbReference>
<dbReference type="CDD" id="cd00063">
    <property type="entry name" value="FN3"/>
    <property type="match status" value="1"/>
</dbReference>
<dbReference type="CDD" id="cd15521">
    <property type="entry name" value="PHD_VIN3_plant"/>
    <property type="match status" value="1"/>
</dbReference>
<dbReference type="Gene3D" id="2.60.40.10">
    <property type="entry name" value="Immunoglobulins"/>
    <property type="match status" value="1"/>
</dbReference>
<dbReference type="InterPro" id="IPR003961">
    <property type="entry name" value="FN3_dom"/>
</dbReference>
<dbReference type="InterPro" id="IPR036116">
    <property type="entry name" value="FN3_sf"/>
</dbReference>
<dbReference type="InterPro" id="IPR013783">
    <property type="entry name" value="Ig-like_fold"/>
</dbReference>
<dbReference type="InterPro" id="IPR032881">
    <property type="entry name" value="Oberon-like_PHD"/>
</dbReference>
<dbReference type="InterPro" id="IPR044514">
    <property type="entry name" value="VIN3-like"/>
</dbReference>
<dbReference type="InterPro" id="IPR056990">
    <property type="entry name" value="VIN3-like_C"/>
</dbReference>
<dbReference type="PANTHER" id="PTHR46286:SF7">
    <property type="entry name" value="PROTEIN VERNALIZATION INSENSITIVE 3"/>
    <property type="match status" value="1"/>
</dbReference>
<dbReference type="PANTHER" id="PTHR46286">
    <property type="entry name" value="VIN3-LIKE PROTEIN 2-RELATED"/>
    <property type="match status" value="1"/>
</dbReference>
<dbReference type="Pfam" id="PF23376">
    <property type="entry name" value="Fn3_VIN3"/>
    <property type="match status" value="1"/>
</dbReference>
<dbReference type="Pfam" id="PF07227">
    <property type="entry name" value="PHD_Oberon"/>
    <property type="match status" value="1"/>
</dbReference>
<dbReference type="Pfam" id="PF23380">
    <property type="entry name" value="VIN3_C"/>
    <property type="match status" value="1"/>
</dbReference>
<dbReference type="SUPFAM" id="SSF49265">
    <property type="entry name" value="Fibronectin type III"/>
    <property type="match status" value="1"/>
</dbReference>
<dbReference type="PROSITE" id="PS50853">
    <property type="entry name" value="FN3"/>
    <property type="match status" value="1"/>
</dbReference>
<organism>
    <name type="scientific">Arabidopsis thaliana</name>
    <name type="common">Mouse-ear cress</name>
    <dbReference type="NCBI Taxonomy" id="3702"/>
    <lineage>
        <taxon>Eukaryota</taxon>
        <taxon>Viridiplantae</taxon>
        <taxon>Streptophyta</taxon>
        <taxon>Embryophyta</taxon>
        <taxon>Tracheophyta</taxon>
        <taxon>Spermatophyta</taxon>
        <taxon>Magnoliopsida</taxon>
        <taxon>eudicotyledons</taxon>
        <taxon>Gunneridae</taxon>
        <taxon>Pentapetalae</taxon>
        <taxon>rosids</taxon>
        <taxon>malvids</taxon>
        <taxon>Brassicales</taxon>
        <taxon>Brassicaceae</taxon>
        <taxon>Camelineae</taxon>
        <taxon>Arabidopsis</taxon>
    </lineage>
</organism>
<keyword id="KW-0002">3D-structure</keyword>
<keyword id="KW-0238">DNA-binding</keyword>
<keyword id="KW-0479">Metal-binding</keyword>
<keyword id="KW-0539">Nucleus</keyword>
<keyword id="KW-1185">Reference proteome</keyword>
<keyword id="KW-0678">Repressor</keyword>
<keyword id="KW-0346">Stress response</keyword>
<keyword id="KW-0804">Transcription</keyword>
<keyword id="KW-0805">Transcription regulation</keyword>
<keyword id="KW-0862">Zinc</keyword>
<keyword id="KW-0863">Zinc-finger</keyword>
<accession>Q9FIE3</accession>
<accession>Q53YX0</accession>
<sequence>MQAASLSKIWRFDGNVGPENMDSSSFEDNECIETCKPNVLNVSERRELIHALSNQPEEASELLNSWSRNEIMKIICAEMGKERKYTGLNKPKLIENLLNLVSRPLGETSCSDRRNSRKKEKKMIGYIICCENLACRAALGCDDTFCRRCSCCICQKFDDNKDPSLWLTCDACGSSCHLECGLKQDRYGIGSDDLDGRFYCAYCGKDNDLLGCWRKQVKVAKETRRVDVLCYRLSLGQKLLRGTTKYRNLLELMDEAVKKLEGDVGPLSGWAMKMARGIVNRLSSGVHVQKLCSQAMEALDKVVSPSESVSGQGDKMTVRVEEIQARSVTVRVDSEEPSSSTQNKITGFRLFCRKSKDEECSSQGNCVVYLPETTSAIQGLEPDTEFCLRVVSFNEEGDLDESELRFTTLKDDGDEAGDQQSPLTNSSSGLCSNPSLPEDESNNVNKSCSKGNGDKDNTEHCSAGEVESELEEERLVKRKANKIDGRDLLVTPCKRDIYKGKQGGNKRFKSRTVSLNEKPEINNAANGVGDKDLGHIVKTIRCLEEEGHIDKSFRERFLTWYSLRATHREVRVVKIFVETFMEDLSSLGQQLVDTFSESILSKRSSTNGVVPAGICLKLWH</sequence>
<gene>
    <name type="primary">VIN3</name>
    <name type="ordered locus">At5g57380</name>
    <name type="ORF">MSF19.4</name>
</gene>
<protein>
    <recommendedName>
        <fullName>Protein VERNALIZATION INSENSITIVE 3</fullName>
    </recommendedName>
</protein>
<feature type="chain" id="PRO_0000059334" description="Protein VERNALIZATION INSENSITIVE 3">
    <location>
        <begin position="1"/>
        <end position="620"/>
    </location>
</feature>
<feature type="domain" description="Fibronectin type-III" evidence="2">
    <location>
        <begin position="314"/>
        <end position="412"/>
    </location>
</feature>
<feature type="zinc finger region" description="PHD-type">
    <location>
        <begin position="148"/>
        <end position="206"/>
    </location>
</feature>
<feature type="region of interest" description="Disordered" evidence="3">
    <location>
        <begin position="411"/>
        <end position="466"/>
    </location>
</feature>
<feature type="region of interest" description="VIN3-Interacting Domain (VID)" evidence="1">
    <location>
        <begin position="512"/>
        <end position="620"/>
    </location>
</feature>
<feature type="short sequence motif" description="Nuclear localization signal" evidence="1">
    <location>
        <begin position="213"/>
        <end position="220"/>
    </location>
</feature>
<feature type="short sequence motif" description="Nuclear localization signal" evidence="1">
    <location>
        <begin position="493"/>
        <end position="500"/>
    </location>
</feature>
<feature type="compositionally biased region" description="Polar residues" evidence="3">
    <location>
        <begin position="418"/>
        <end position="435"/>
    </location>
</feature>
<feature type="helix" evidence="9">
    <location>
        <begin position="533"/>
        <end position="545"/>
    </location>
</feature>
<feature type="helix" evidence="9">
    <location>
        <begin position="551"/>
        <end position="563"/>
    </location>
</feature>
<feature type="helix" evidence="9">
    <location>
        <begin position="567"/>
        <end position="599"/>
    </location>
</feature>
<reference key="1">
    <citation type="journal article" date="2004" name="Nature">
        <title>Vernalization in Arabidopsis thaliana is mediated by the PHD finger protein VIN3.</title>
        <authorList>
            <person name="Sung S."/>
            <person name="Amasino R.M."/>
        </authorList>
    </citation>
    <scope>NUCLEOTIDE SEQUENCE [MRNA]</scope>
    <scope>FUNCTION</scope>
    <scope>SUBCELLULAR LOCATION</scope>
    <scope>TISSUE SPECIFICITY</scope>
    <scope>INDUCTION</scope>
    <source>
        <strain>cv. Columbia</strain>
    </source>
</reference>
<reference key="2">
    <citation type="journal article" date="1998" name="DNA Res.">
        <title>Structural analysis of Arabidopsis thaliana chromosome 5. VIII. Sequence features of the regions of 1,081,958 bp covered by seventeen physically assigned P1 and TAC clones.</title>
        <authorList>
            <person name="Asamizu E."/>
            <person name="Sato S."/>
            <person name="Kaneko T."/>
            <person name="Nakamura Y."/>
            <person name="Kotani H."/>
            <person name="Miyajima N."/>
            <person name="Tabata S."/>
        </authorList>
    </citation>
    <scope>NUCLEOTIDE SEQUENCE [LARGE SCALE GENOMIC DNA]</scope>
    <source>
        <strain>cv. Columbia</strain>
    </source>
</reference>
<reference key="3">
    <citation type="journal article" date="2017" name="Plant J.">
        <title>Araport11: a complete reannotation of the Arabidopsis thaliana reference genome.</title>
        <authorList>
            <person name="Cheng C.Y."/>
            <person name="Krishnakumar V."/>
            <person name="Chan A.P."/>
            <person name="Thibaud-Nissen F."/>
            <person name="Schobel S."/>
            <person name="Town C.D."/>
        </authorList>
    </citation>
    <scope>GENOME REANNOTATION</scope>
    <source>
        <strain>cv. Columbia</strain>
    </source>
</reference>
<reference key="4">
    <citation type="journal article" date="2006" name="Genes Dev.">
        <title>A PHD finger protein involved in both the vernalization and photoperiod pathways in Arabidopsis.</title>
        <authorList>
            <person name="Sung S."/>
            <person name="Schmitz R.J."/>
            <person name="Amasino R.M."/>
        </authorList>
    </citation>
    <scope>FUNCTION</scope>
    <scope>DISRUPTION PHENOTYPE</scope>
    <scope>INTERACTION WITH VIL1 AND VIL2</scope>
    <scope>INDUCTION BY COLD</scope>
    <source>
        <strain>cv. Columbia</strain>
    </source>
</reference>
<reference key="5">
    <citation type="journal article" date="2007" name="Curr. Biol.">
        <title>The PHD finger protein VRN5 functions in the epigenetic silencing of Arabidopsis FLC.</title>
        <authorList>
            <person name="Greb T."/>
            <person name="Mylne J.S."/>
            <person name="Crevillen P."/>
            <person name="Geraldo N."/>
            <person name="An H."/>
            <person name="Gendall A.R."/>
            <person name="Dean C."/>
        </authorList>
    </citation>
    <scope>FUNCTION</scope>
    <scope>DISRUPTION PHENOTYPE</scope>
    <scope>INDUCTION BY COLD</scope>
    <scope>INTERACTION WITH VIL1</scope>
    <scope>SUBCELLULAR LOCATION</scope>
    <source>
        <strain>cv. Landsberg erecta</strain>
    </source>
</reference>
<reference key="6">
    <citation type="journal article" date="2008" name="Proc. Natl. Acad. Sci. U.S.A.">
        <title>A PHD-polycomb repressive complex 2 triggers the epigenetic silencing of FLC during vernalization.</title>
        <authorList>
            <person name="De Lucia F."/>
            <person name="Crevillen P."/>
            <person name="Jones A.M.E."/>
            <person name="Greb T."/>
            <person name="Dean C."/>
        </authorList>
    </citation>
    <scope>SUBUNIT</scope>
    <scope>IDENTIFICATION BY MASS SPECTROMETRY</scope>
</reference>
<evidence type="ECO:0000250" key="1"/>
<evidence type="ECO:0000255" key="2">
    <source>
        <dbReference type="PROSITE-ProRule" id="PRU00316"/>
    </source>
</evidence>
<evidence type="ECO:0000256" key="3">
    <source>
        <dbReference type="SAM" id="MobiDB-lite"/>
    </source>
</evidence>
<evidence type="ECO:0000269" key="4">
    <source>
    </source>
</evidence>
<evidence type="ECO:0000269" key="5">
    <source>
    </source>
</evidence>
<evidence type="ECO:0000269" key="6">
    <source>
    </source>
</evidence>
<evidence type="ECO:0000269" key="7">
    <source>
    </source>
</evidence>
<evidence type="ECO:0000305" key="8"/>
<evidence type="ECO:0007829" key="9">
    <source>
        <dbReference type="PDB" id="7O6U"/>
    </source>
</evidence>
<name>VIN3_ARATH</name>